<gene>
    <name evidence="23 25" type="primary">TFE3</name>
    <name evidence="25" type="synonym">BHLHE33</name>
</gene>
<organism>
    <name type="scientific">Homo sapiens</name>
    <name type="common">Human</name>
    <dbReference type="NCBI Taxonomy" id="9606"/>
    <lineage>
        <taxon>Eukaryota</taxon>
        <taxon>Metazoa</taxon>
        <taxon>Chordata</taxon>
        <taxon>Craniata</taxon>
        <taxon>Vertebrata</taxon>
        <taxon>Euteleostomi</taxon>
        <taxon>Mammalia</taxon>
        <taxon>Eutheria</taxon>
        <taxon>Euarchontoglires</taxon>
        <taxon>Primates</taxon>
        <taxon>Haplorrhini</taxon>
        <taxon>Catarrhini</taxon>
        <taxon>Hominidae</taxon>
        <taxon>Homo</taxon>
    </lineage>
</organism>
<reference key="1">
    <citation type="journal article" date="1997" name="Oncogene">
        <title>Fusion of splicing factor genes PSF and NonO (p54nrb) to the TFE3 gene in papillary renal cell carcinoma.</title>
        <authorList>
            <person name="Clark J."/>
            <person name="Lu Y.-J."/>
            <person name="Sidhar S.K."/>
            <person name="Parker C."/>
            <person name="Gill S."/>
            <person name="Smedley D."/>
            <person name="Hamoudi R."/>
            <person name="Linehan W.M."/>
            <person name="Shipley J."/>
            <person name="Cooper C.S."/>
        </authorList>
    </citation>
    <scope>NUCLEOTIDE SEQUENCE [MRNA] (ISOFORM 1)</scope>
    <scope>CHROMOSOMAL TRANSLOCATION WITH PSF AND NONO</scope>
</reference>
<reference key="2">
    <citation type="submission" date="1997-11" db="EMBL/GenBank/DDBJ databases">
        <authorList>
            <person name="Clark J."/>
        </authorList>
    </citation>
    <scope>SEQUENCE REVISION</scope>
</reference>
<reference key="3">
    <citation type="journal article" date="2007" name="BMC Genomics">
        <title>The full-ORF clone resource of the German cDNA consortium.</title>
        <authorList>
            <person name="Bechtel S."/>
            <person name="Rosenfelder H."/>
            <person name="Duda A."/>
            <person name="Schmidt C.P."/>
            <person name="Ernst U."/>
            <person name="Wellenreuther R."/>
            <person name="Mehrle A."/>
            <person name="Schuster C."/>
            <person name="Bahr A."/>
            <person name="Bloecker H."/>
            <person name="Heubner D."/>
            <person name="Hoerlein A."/>
            <person name="Michel G."/>
            <person name="Wedler H."/>
            <person name="Koehrer K."/>
            <person name="Ottenwaelder B."/>
            <person name="Poustka A."/>
            <person name="Wiemann S."/>
            <person name="Schupp I."/>
        </authorList>
    </citation>
    <scope>NUCLEOTIDE SEQUENCE [LARGE SCALE MRNA] (ISOFORM 2)</scope>
    <source>
        <tissue>Amygdala</tissue>
    </source>
</reference>
<reference key="4">
    <citation type="journal article" date="2005" name="Nature">
        <title>The DNA sequence of the human X chromosome.</title>
        <authorList>
            <person name="Ross M.T."/>
            <person name="Grafham D.V."/>
            <person name="Coffey A.J."/>
            <person name="Scherer S."/>
            <person name="McLay K."/>
            <person name="Muzny D."/>
            <person name="Platzer M."/>
            <person name="Howell G.R."/>
            <person name="Burrows C."/>
            <person name="Bird C.P."/>
            <person name="Frankish A."/>
            <person name="Lovell F.L."/>
            <person name="Howe K.L."/>
            <person name="Ashurst J.L."/>
            <person name="Fulton R.S."/>
            <person name="Sudbrak R."/>
            <person name="Wen G."/>
            <person name="Jones M.C."/>
            <person name="Hurles M.E."/>
            <person name="Andrews T.D."/>
            <person name="Scott C.E."/>
            <person name="Searle S."/>
            <person name="Ramser J."/>
            <person name="Whittaker A."/>
            <person name="Deadman R."/>
            <person name="Carter N.P."/>
            <person name="Hunt S.E."/>
            <person name="Chen R."/>
            <person name="Cree A."/>
            <person name="Gunaratne P."/>
            <person name="Havlak P."/>
            <person name="Hodgson A."/>
            <person name="Metzker M.L."/>
            <person name="Richards S."/>
            <person name="Scott G."/>
            <person name="Steffen D."/>
            <person name="Sodergren E."/>
            <person name="Wheeler D.A."/>
            <person name="Worley K.C."/>
            <person name="Ainscough R."/>
            <person name="Ambrose K.D."/>
            <person name="Ansari-Lari M.A."/>
            <person name="Aradhya S."/>
            <person name="Ashwell R.I."/>
            <person name="Babbage A.K."/>
            <person name="Bagguley C.L."/>
            <person name="Ballabio A."/>
            <person name="Banerjee R."/>
            <person name="Barker G.E."/>
            <person name="Barlow K.F."/>
            <person name="Barrett I.P."/>
            <person name="Bates K.N."/>
            <person name="Beare D.M."/>
            <person name="Beasley H."/>
            <person name="Beasley O."/>
            <person name="Beck A."/>
            <person name="Bethel G."/>
            <person name="Blechschmidt K."/>
            <person name="Brady N."/>
            <person name="Bray-Allen S."/>
            <person name="Bridgeman A.M."/>
            <person name="Brown A.J."/>
            <person name="Brown M.J."/>
            <person name="Bonnin D."/>
            <person name="Bruford E.A."/>
            <person name="Buhay C."/>
            <person name="Burch P."/>
            <person name="Burford D."/>
            <person name="Burgess J."/>
            <person name="Burrill W."/>
            <person name="Burton J."/>
            <person name="Bye J.M."/>
            <person name="Carder C."/>
            <person name="Carrel L."/>
            <person name="Chako J."/>
            <person name="Chapman J.C."/>
            <person name="Chavez D."/>
            <person name="Chen E."/>
            <person name="Chen G."/>
            <person name="Chen Y."/>
            <person name="Chen Z."/>
            <person name="Chinault C."/>
            <person name="Ciccodicola A."/>
            <person name="Clark S.Y."/>
            <person name="Clarke G."/>
            <person name="Clee C.M."/>
            <person name="Clegg S."/>
            <person name="Clerc-Blankenburg K."/>
            <person name="Clifford K."/>
            <person name="Cobley V."/>
            <person name="Cole C.G."/>
            <person name="Conquer J.S."/>
            <person name="Corby N."/>
            <person name="Connor R.E."/>
            <person name="David R."/>
            <person name="Davies J."/>
            <person name="Davis C."/>
            <person name="Davis J."/>
            <person name="Delgado O."/>
            <person name="Deshazo D."/>
            <person name="Dhami P."/>
            <person name="Ding Y."/>
            <person name="Dinh H."/>
            <person name="Dodsworth S."/>
            <person name="Draper H."/>
            <person name="Dugan-Rocha S."/>
            <person name="Dunham A."/>
            <person name="Dunn M."/>
            <person name="Durbin K.J."/>
            <person name="Dutta I."/>
            <person name="Eades T."/>
            <person name="Ellwood M."/>
            <person name="Emery-Cohen A."/>
            <person name="Errington H."/>
            <person name="Evans K.L."/>
            <person name="Faulkner L."/>
            <person name="Francis F."/>
            <person name="Frankland J."/>
            <person name="Fraser A.E."/>
            <person name="Galgoczy P."/>
            <person name="Gilbert J."/>
            <person name="Gill R."/>
            <person name="Gloeckner G."/>
            <person name="Gregory S.G."/>
            <person name="Gribble S."/>
            <person name="Griffiths C."/>
            <person name="Grocock R."/>
            <person name="Gu Y."/>
            <person name="Gwilliam R."/>
            <person name="Hamilton C."/>
            <person name="Hart E.A."/>
            <person name="Hawes A."/>
            <person name="Heath P.D."/>
            <person name="Heitmann K."/>
            <person name="Hennig S."/>
            <person name="Hernandez J."/>
            <person name="Hinzmann B."/>
            <person name="Ho S."/>
            <person name="Hoffs M."/>
            <person name="Howden P.J."/>
            <person name="Huckle E.J."/>
            <person name="Hume J."/>
            <person name="Hunt P.J."/>
            <person name="Hunt A.R."/>
            <person name="Isherwood J."/>
            <person name="Jacob L."/>
            <person name="Johnson D."/>
            <person name="Jones S."/>
            <person name="de Jong P.J."/>
            <person name="Joseph S.S."/>
            <person name="Keenan S."/>
            <person name="Kelly S."/>
            <person name="Kershaw J.K."/>
            <person name="Khan Z."/>
            <person name="Kioschis P."/>
            <person name="Klages S."/>
            <person name="Knights A.J."/>
            <person name="Kosiura A."/>
            <person name="Kovar-Smith C."/>
            <person name="Laird G.K."/>
            <person name="Langford C."/>
            <person name="Lawlor S."/>
            <person name="Leversha M."/>
            <person name="Lewis L."/>
            <person name="Liu W."/>
            <person name="Lloyd C."/>
            <person name="Lloyd D.M."/>
            <person name="Loulseged H."/>
            <person name="Loveland J.E."/>
            <person name="Lovell J.D."/>
            <person name="Lozado R."/>
            <person name="Lu J."/>
            <person name="Lyne R."/>
            <person name="Ma J."/>
            <person name="Maheshwari M."/>
            <person name="Matthews L.H."/>
            <person name="McDowall J."/>
            <person name="McLaren S."/>
            <person name="McMurray A."/>
            <person name="Meidl P."/>
            <person name="Meitinger T."/>
            <person name="Milne S."/>
            <person name="Miner G."/>
            <person name="Mistry S.L."/>
            <person name="Morgan M."/>
            <person name="Morris S."/>
            <person name="Mueller I."/>
            <person name="Mullikin J.C."/>
            <person name="Nguyen N."/>
            <person name="Nordsiek G."/>
            <person name="Nyakatura G."/>
            <person name="O'dell C.N."/>
            <person name="Okwuonu G."/>
            <person name="Palmer S."/>
            <person name="Pandian R."/>
            <person name="Parker D."/>
            <person name="Parrish J."/>
            <person name="Pasternak S."/>
            <person name="Patel D."/>
            <person name="Pearce A.V."/>
            <person name="Pearson D.M."/>
            <person name="Pelan S.E."/>
            <person name="Perez L."/>
            <person name="Porter K.M."/>
            <person name="Ramsey Y."/>
            <person name="Reichwald K."/>
            <person name="Rhodes S."/>
            <person name="Ridler K.A."/>
            <person name="Schlessinger D."/>
            <person name="Schueler M.G."/>
            <person name="Sehra H.K."/>
            <person name="Shaw-Smith C."/>
            <person name="Shen H."/>
            <person name="Sheridan E.M."/>
            <person name="Shownkeen R."/>
            <person name="Skuce C.D."/>
            <person name="Smith M.L."/>
            <person name="Sotheran E.C."/>
            <person name="Steingruber H.E."/>
            <person name="Steward C.A."/>
            <person name="Storey R."/>
            <person name="Swann R.M."/>
            <person name="Swarbreck D."/>
            <person name="Tabor P.E."/>
            <person name="Taudien S."/>
            <person name="Taylor T."/>
            <person name="Teague B."/>
            <person name="Thomas K."/>
            <person name="Thorpe A."/>
            <person name="Timms K."/>
            <person name="Tracey A."/>
            <person name="Trevanion S."/>
            <person name="Tromans A.C."/>
            <person name="d'Urso M."/>
            <person name="Verduzco D."/>
            <person name="Villasana D."/>
            <person name="Waldron L."/>
            <person name="Wall M."/>
            <person name="Wang Q."/>
            <person name="Warren J."/>
            <person name="Warry G.L."/>
            <person name="Wei X."/>
            <person name="West A."/>
            <person name="Whitehead S.L."/>
            <person name="Whiteley M.N."/>
            <person name="Wilkinson J.E."/>
            <person name="Willey D.L."/>
            <person name="Williams G."/>
            <person name="Williams L."/>
            <person name="Williamson A."/>
            <person name="Williamson H."/>
            <person name="Wilming L."/>
            <person name="Woodmansey R.L."/>
            <person name="Wray P.W."/>
            <person name="Yen J."/>
            <person name="Zhang J."/>
            <person name="Zhou J."/>
            <person name="Zoghbi H."/>
            <person name="Zorilla S."/>
            <person name="Buck D."/>
            <person name="Reinhardt R."/>
            <person name="Poustka A."/>
            <person name="Rosenthal A."/>
            <person name="Lehrach H."/>
            <person name="Meindl A."/>
            <person name="Minx P.J."/>
            <person name="Hillier L.W."/>
            <person name="Willard H.F."/>
            <person name="Wilson R.K."/>
            <person name="Waterston R.H."/>
            <person name="Rice C.M."/>
            <person name="Vaudin M."/>
            <person name="Coulson A."/>
            <person name="Nelson D.L."/>
            <person name="Weinstock G."/>
            <person name="Sulston J.E."/>
            <person name="Durbin R.M."/>
            <person name="Hubbard T."/>
            <person name="Gibbs R.A."/>
            <person name="Beck S."/>
            <person name="Rogers J."/>
            <person name="Bentley D.R."/>
        </authorList>
    </citation>
    <scope>NUCLEOTIDE SEQUENCE [LARGE SCALE GENOMIC DNA]</scope>
</reference>
<reference key="5">
    <citation type="journal article" date="1996" name="Proc. Natl. Acad. Sci. U.S.A.">
        <title>Fusion of the transcription factor TFE3 gene to a novel gene, PRCC, in t(X;1)(p11;q21)-positive papillary renal cell carcinomas.</title>
        <authorList>
            <person name="Weterman M.A.J."/>
            <person name="Wilbrink M."/>
            <person name="Geurts van Kessel A."/>
        </authorList>
    </citation>
    <scope>NUCLEOTIDE SEQUENCE [GENOMIC DNA] OF 1-219</scope>
    <scope>INVOLVEMENT IN RCCX1</scope>
    <scope>CHROMOSOMAL TRANSLOCATION WITH PRCC</scope>
    <scope>TISSUE SPECIFICITY</scope>
</reference>
<reference key="6">
    <citation type="journal article" date="1996" name="Hum. Mol. Genet.">
        <title>The t(X;1)(p11.2;q21.2) translocation in papillary renal cell carcinoma fuses a novel gene PRCC to the TFE3 transcription factor gene.</title>
        <authorList>
            <person name="Sidhar S.K."/>
            <person name="Clark J."/>
            <person name="Gill S."/>
            <person name="Hamoudi R."/>
            <person name="Crew A.J."/>
            <person name="Gwilliam R."/>
            <person name="Ross M."/>
            <person name="Linehan W.M."/>
            <person name="Birdsall S."/>
            <person name="Shipley J."/>
            <person name="Cooper C.S."/>
        </authorList>
    </citation>
    <scope>NUCLEOTIDE SEQUENCE [GENOMIC DNA] OF 149-575</scope>
    <scope>INVOLVEMENT IN RCCX1</scope>
    <scope>CHROMOSOMAL TRANSLOCATION WITH PRCC</scope>
    <source>
        <tissue>Monocyte</tissue>
    </source>
</reference>
<reference key="7">
    <citation type="journal article" date="1990" name="Genes Dev.">
        <title>TFE3: a helix-loop-helix protein that activates transcription through the immunoglobulin enhancer muE3 motif.</title>
        <authorList>
            <person name="Beckmann H."/>
            <person name="Su L.-K."/>
            <person name="Kadesch T."/>
        </authorList>
    </citation>
    <scope>NUCLEOTIDE SEQUENCE [MRNA] OF 212-575 (ISOFORM 1)</scope>
    <scope>FUNCTION</scope>
    <source>
        <tissue>Leukemia</tissue>
    </source>
</reference>
<reference key="8">
    <citation type="journal article" date="1991" name="Genes Dev.">
        <title>TFEB has DNA-binding and oligomerization properties of a unique helix-loop-helix/leucine-zipper family.</title>
        <authorList>
            <person name="Fisher D.E."/>
            <person name="Carr C.S."/>
            <person name="Parent L.A."/>
            <person name="Sharp P.A."/>
        </authorList>
    </citation>
    <scope>INTERACTION WITH TFEB</scope>
</reference>
<reference key="9">
    <citation type="journal article" date="2001" name="Cancer Res.">
        <title>Fusion of a novel gene, RCC17, to the TFE3 gene in t(X;17)(p11.2;q25.3)-bearing papillary renal cell carcinomas.</title>
        <authorList>
            <person name="Heimann P."/>
            <person name="El Housni H."/>
            <person name="Ogur G."/>
            <person name="Weterman M.A.J."/>
            <person name="Petty E.M."/>
            <person name="Vassart G."/>
        </authorList>
    </citation>
    <scope>CHROMOSOMAL TRANSLOCATION WITH ASPSCR1</scope>
</reference>
<reference key="10">
    <citation type="journal article" date="2001" name="Oncogene">
        <title>The der(17)t(X;17)(p11;q25) of human alveolar soft part sarcoma fuses the TFE3 transcription factor gene to ASPL, a novel gene at 17q25.</title>
        <authorList>
            <person name="Ladanyi M."/>
            <person name="Lui M.Y."/>
            <person name="Antonescu C.R."/>
            <person name="Krause-Boehm A."/>
            <person name="Meindl A."/>
            <person name="Argani P."/>
            <person name="Healey J.H."/>
            <person name="Ueda T."/>
            <person name="Yoshikawa H."/>
            <person name="Meloni-Ehrig A."/>
            <person name="Sorensen P.H.B."/>
            <person name="Mertens F."/>
            <person name="Mandahl N."/>
            <person name="van den Berghe H."/>
            <person name="Sciot R."/>
            <person name="Dal Cin P."/>
            <person name="Bridge J."/>
        </authorList>
    </citation>
    <scope>CHROMOSOMAL TRANSLOCATION WITH ASPSCR1</scope>
    <scope>INVOLVEMENT IN ASPS</scope>
</reference>
<reference key="11">
    <citation type="journal article" date="2005" name="J. Biol. Chem.">
        <title>Sumoylation of MITF and its related family members TFE3 and TFEB.</title>
        <authorList>
            <person name="Miller A.J."/>
            <person name="Levy C."/>
            <person name="Davis I.J."/>
            <person name="Razin E."/>
            <person name="Fisher D.E."/>
        </authorList>
    </citation>
    <scope>SUMOYLATION</scope>
    <scope>INTERACTION WITH MITF</scope>
</reference>
<reference key="12">
    <citation type="journal article" date="2006" name="Cell">
        <title>Global, in vivo, and site-specific phosphorylation dynamics in signaling networks.</title>
        <authorList>
            <person name="Olsen J.V."/>
            <person name="Blagoev B."/>
            <person name="Gnad F."/>
            <person name="Macek B."/>
            <person name="Kumar C."/>
            <person name="Mortensen P."/>
            <person name="Mann M."/>
        </authorList>
    </citation>
    <scope>PHOSPHORYLATION [LARGE SCALE ANALYSIS] AT SER-560</scope>
    <scope>IDENTIFICATION BY MASS SPECTROMETRY [LARGE SCALE ANALYSIS]</scope>
    <source>
        <tissue>Cervix carcinoma</tissue>
    </source>
</reference>
<reference key="13">
    <citation type="journal article" date="2009" name="Anal. Chem.">
        <title>Lys-N and trypsin cover complementary parts of the phosphoproteome in a refined SCX-based approach.</title>
        <authorList>
            <person name="Gauci S."/>
            <person name="Helbig A.O."/>
            <person name="Slijper M."/>
            <person name="Krijgsveld J."/>
            <person name="Heck A.J."/>
            <person name="Mohammed S."/>
        </authorList>
    </citation>
    <scope>IDENTIFICATION BY MASS SPECTROMETRY [LARGE SCALE ANALYSIS]</scope>
</reference>
<reference key="14">
    <citation type="journal article" date="2010" name="PLoS ONE">
        <title>Inactivation of the FLCN tumor suppressor gene induces TFE3 transcriptional activity by increasing its nuclear localization.</title>
        <authorList>
            <person name="Hong S.B."/>
            <person name="Oh H."/>
            <person name="Valera V.A."/>
            <person name="Baba M."/>
            <person name="Schmidt L.S."/>
            <person name="Linehan W.M."/>
        </authorList>
    </citation>
    <scope>PHOSPHORYLATION</scope>
    <scope>SUBCELLULAR LOCATION</scope>
</reference>
<reference key="15">
    <citation type="journal article" date="2010" name="Sci. Signal.">
        <title>Quantitative phosphoproteomics reveals widespread full phosphorylation site occupancy during mitosis.</title>
        <authorList>
            <person name="Olsen J.V."/>
            <person name="Vermeulen M."/>
            <person name="Santamaria A."/>
            <person name="Kumar C."/>
            <person name="Miller M.L."/>
            <person name="Jensen L.J."/>
            <person name="Gnad F."/>
            <person name="Cox J."/>
            <person name="Jensen T.S."/>
            <person name="Nigg E.A."/>
            <person name="Brunak S."/>
            <person name="Mann M."/>
        </authorList>
    </citation>
    <scope>PHOSPHORYLATION [LARGE SCALE ANALYSIS] AT SER-548; SER-556 AND SER-560</scope>
    <scope>IDENTIFICATION BY MASS SPECTROMETRY [LARGE SCALE ANALYSIS]</scope>
    <source>
        <tissue>Cervix carcinoma</tissue>
    </source>
</reference>
<reference key="16">
    <citation type="journal article" date="2011" name="Sci. Signal.">
        <title>System-wide temporal characterization of the proteome and phosphoproteome of human embryonic stem cell differentiation.</title>
        <authorList>
            <person name="Rigbolt K.T."/>
            <person name="Prokhorova T.A."/>
            <person name="Akimov V."/>
            <person name="Henningsen J."/>
            <person name="Johansen P.T."/>
            <person name="Kratchmarova I."/>
            <person name="Kassem M."/>
            <person name="Mann M."/>
            <person name="Olsen J.V."/>
            <person name="Blagoev B."/>
        </authorList>
    </citation>
    <scope>PHOSPHORYLATION [LARGE SCALE ANALYSIS] AT SER-556 AND SER-568</scope>
    <scope>IDENTIFICATION BY MASS SPECTROMETRY [LARGE SCALE ANALYSIS]</scope>
</reference>
<reference key="17">
    <citation type="journal article" date="2012" name="Sci. Signal.">
        <title>The transcription factor TFEB links mTORC1 signaling to transcriptional control of lysosome homeostasis.</title>
        <authorList>
            <person name="Roczniak-Ferguson A."/>
            <person name="Petit C.S."/>
            <person name="Froehlich F."/>
            <person name="Qian S."/>
            <person name="Ky J."/>
            <person name="Angarola B."/>
            <person name="Walther T.C."/>
            <person name="Ferguson S.M."/>
        </authorList>
    </citation>
    <scope>SUBCELLULAR LOCATION</scope>
</reference>
<reference key="18">
    <citation type="journal article" date="2013" name="J. Proteome Res.">
        <title>Toward a comprehensive characterization of a human cancer cell phosphoproteome.</title>
        <authorList>
            <person name="Zhou H."/>
            <person name="Di Palma S."/>
            <person name="Preisinger C."/>
            <person name="Peng M."/>
            <person name="Polat A.N."/>
            <person name="Heck A.J."/>
            <person name="Mohammed S."/>
        </authorList>
    </citation>
    <scope>PHOSPHORYLATION [LARGE SCALE ANALYSIS] AT SER-548; SER-556 AND SER-560</scope>
    <scope>IDENTIFICATION BY MASS SPECTROMETRY [LARGE SCALE ANALYSIS]</scope>
    <source>
        <tissue>Cervix carcinoma</tissue>
        <tissue>Erythroleukemia</tissue>
    </source>
</reference>
<reference key="19">
    <citation type="journal article" date="2014" name="J. Proteomics">
        <title>An enzyme assisted RP-RPLC approach for in-depth analysis of human liver phosphoproteome.</title>
        <authorList>
            <person name="Bian Y."/>
            <person name="Song C."/>
            <person name="Cheng K."/>
            <person name="Dong M."/>
            <person name="Wang F."/>
            <person name="Huang J."/>
            <person name="Sun D."/>
            <person name="Wang L."/>
            <person name="Ye M."/>
            <person name="Zou H."/>
        </authorList>
    </citation>
    <scope>PHOSPHORYLATION [LARGE SCALE ANALYSIS] AT SER-542 AND SER-548</scope>
    <scope>IDENTIFICATION BY MASS SPECTROMETRY [LARGE SCALE ANALYSIS]</scope>
    <source>
        <tissue>Liver</tissue>
    </source>
</reference>
<reference key="20">
    <citation type="journal article" date="2014" name="Sci. Signal.">
        <title>The nutrient-responsive transcription factor TFE3 promotes autophagy, lysosomal biogenesis, and clearance of cellular debris.</title>
        <authorList>
            <person name="Martina J.A."/>
            <person name="Diab H.I."/>
            <person name="Lishu L."/>
            <person name="Jeong-A L."/>
            <person name="Patange S."/>
            <person name="Raben N."/>
            <person name="Puertollano R."/>
        </authorList>
    </citation>
    <scope>FUNCTION</scope>
    <scope>SUBCELLULAR LOCATION</scope>
    <scope>INTERACTION WITH SMALL GTPASES RAG</scope>
    <scope>PHOSPHORYLATION AT SER-321</scope>
    <scope>MUTAGENESIS OF 112-SER-ARG-113 AND SER-321</scope>
</reference>
<reference key="21">
    <citation type="journal article" date="2017" name="Nat. Commun.">
        <title>TFEB regulates lysosomal positioning by modulating TMEM55B expression and JIP4 recruitment to lysosomes.</title>
        <authorList>
            <person name="Willett R."/>
            <person name="Martina J.A."/>
            <person name="Zewe J.P."/>
            <person name="Wills R."/>
            <person name="Hammond G.R.V."/>
            <person name="Puertollano R."/>
        </authorList>
    </citation>
    <scope>FUNCTION</scope>
</reference>
<reference key="22">
    <citation type="journal article" date="2017" name="Nat. Struct. Mol. Biol.">
        <title>Site-specific mapping of the human SUMO proteome reveals co-modification with phosphorylation.</title>
        <authorList>
            <person name="Hendriks I.A."/>
            <person name="Lyon D."/>
            <person name="Young C."/>
            <person name="Jensen L.J."/>
            <person name="Vertegaal A.C."/>
            <person name="Nielsen M.L."/>
        </authorList>
    </citation>
    <scope>SUMOYLATION [LARGE SCALE ANALYSIS] AT LYS-339</scope>
    <scope>IDENTIFICATION BY MASS SPECTROMETRY [LARGE SCALE ANALYSIS]</scope>
</reference>
<reference key="23">
    <citation type="journal article" date="2019" name="Nat. Commun.">
        <title>Folliculin regulates mTORC1/2 and WNT pathways in early human pluripotency.</title>
        <authorList>
            <person name="Mathieu J."/>
            <person name="Detraux D."/>
            <person name="Kuppers D."/>
            <person name="Wang Y."/>
            <person name="Cavanaugh C."/>
            <person name="Sidhu S."/>
            <person name="Levy S."/>
            <person name="Robitaille A.M."/>
            <person name="Ferreccio A."/>
            <person name="Bottorff T."/>
            <person name="McAlister A."/>
            <person name="Somasundaram L."/>
            <person name="Artoni F."/>
            <person name="Battle S."/>
            <person name="Hawkins R.D."/>
            <person name="Moon R.T."/>
            <person name="Ware C.B."/>
            <person name="Paddison P.J."/>
            <person name="Ruohola-Baker H."/>
        </authorList>
    </citation>
    <scope>FUNCTION</scope>
    <scope>SUBCELLULAR LOCATION</scope>
    <scope>PHOSPHORYLATION</scope>
</reference>
<reference key="24">
    <citation type="journal article" date="2019" name="Science">
        <title>Structural mechanism of a Rag GTPase activation checkpoint by the lysosomal folliculin complex.</title>
        <authorList>
            <person name="Lawrence R.E."/>
            <person name="Fromm S.A."/>
            <person name="Fu Y."/>
            <person name="Yokom A.L."/>
            <person name="Kim D.J."/>
            <person name="Thelen A.M."/>
            <person name="Young L.N."/>
            <person name="Lim C.Y."/>
            <person name="Samelson A.J."/>
            <person name="Hurley J.H."/>
            <person name="Zoncu R."/>
        </authorList>
    </citation>
    <scope>FUNCTION</scope>
</reference>
<reference key="25">
    <citation type="journal article" date="2023" name="Mol. Cell">
        <title>A central role for regulated protein stability in the control of TFE3 and MITF by nutrients.</title>
        <authorList>
            <person name="Nardone C."/>
            <person name="Palanski B.A."/>
            <person name="Scott D.C."/>
            <person name="Timms R.T."/>
            <person name="Barber K.W."/>
            <person name="Gu X."/>
            <person name="Mao A."/>
            <person name="Leng Y."/>
            <person name="Watson E.V."/>
            <person name="Schulman B.A."/>
            <person name="Cole P.A."/>
            <person name="Elledge S.J."/>
        </authorList>
    </citation>
    <scope>FUNCTION</scope>
    <scope>SUBCELLULAR LOCATION</scope>
    <scope>INTERACTION WITH SMALL GTPASES RAG</scope>
    <scope>PHOSPHORYLATION AT SER-47 AND SER-321</scope>
    <scope>UBIQUITINATION</scope>
    <scope>MUTAGENESIS OF SER-47; SER-321 AND 356-ARG--ARG-359</scope>
    <scope>VARIANTS MRXSPF GLY-184; LEU-186; MET-187; CYS-189; GLN-190; PRO-191 AND PRO-201</scope>
    <scope>CHARACTERIZATION OF VARIANTS MRXSPF GLY-184; LEU-186; MET-187; CYS-189; GLN-190; PRO-191 AND PRO-201</scope>
</reference>
<reference key="26">
    <citation type="journal article" date="2023" name="Science">
        <title>Induction of lysosomal and mitochondrial biogenesis by AMPK phosphorylation of FNIP1.</title>
        <authorList>
            <person name="Malik N."/>
            <person name="Ferreira B.I."/>
            <person name="Hollstein P.E."/>
            <person name="Curtis S.D."/>
            <person name="Trefts E."/>
            <person name="Weiser Novak S."/>
            <person name="Yu J."/>
            <person name="Gilson R."/>
            <person name="Hellberg K."/>
            <person name="Fang L."/>
            <person name="Sheridan A."/>
            <person name="Hah N."/>
            <person name="Shadel G.S."/>
            <person name="Manor U."/>
            <person name="Shaw R.J."/>
        </authorList>
    </citation>
    <scope>FUNCTION</scope>
    <scope>SUBCELLULAR LOCATION</scope>
</reference>
<reference key="27">
    <citation type="journal article" date="2019" name="Cell Stem Cell">
        <title>Lysosomal signaling licenses embryonic stem cell differentiation via inactivation of Tfe3.</title>
        <authorList>
            <person name="Villegas F."/>
            <person name="Lehalle D."/>
            <person name="Mayer D."/>
            <person name="Rittirsch M."/>
            <person name="Stadler M.B."/>
            <person name="Zinner M."/>
            <person name="Olivieri D."/>
            <person name="Vabres P."/>
            <person name="Duplomb-Jego L."/>
            <person name="De Bont E.S.J.M."/>
            <person name="Duffourd Y."/>
            <person name="Duijkers F."/>
            <person name="Avila M."/>
            <person name="Genevieve D."/>
            <person name="Houcinat N."/>
            <person name="Jouan T."/>
            <person name="Kuentz P."/>
            <person name="Lichtenbelt K.D."/>
            <person name="Thauvin-Robinet C."/>
            <person name="St-Onge J."/>
            <person name="Thevenon J."/>
            <person name="van Gassen K.L.I."/>
            <person name="van Haelst M."/>
            <person name="van Koningsbruggen S."/>
            <person name="Hess D."/>
            <person name="Smallwood S.A."/>
            <person name="Riviere J.B."/>
            <person name="Faivre L."/>
            <person name="Betschinger J."/>
        </authorList>
    </citation>
    <scope>VARIANTS MRXSPF PRO-119; LEU-186; ARG-187; MET-187 AND PRO-201</scope>
    <scope>INVOLVEMENT IN MRXSPF</scope>
</reference>
<reference key="28">
    <citation type="journal article" date="2020" name="Am. J. Med. Genet. A">
        <title>TFE3-associated neurodevelopmental disorder: A distinct recognizable syndrome.</title>
        <authorList>
            <person name="Diaz J."/>
            <person name="Berger S."/>
            <person name="Leon E."/>
        </authorList>
    </citation>
    <scope>VARIANT MRXSPF GLN-117</scope>
    <scope>INVOLVEMENT IN MRXSPF</scope>
</reference>
<reference key="29">
    <citation type="journal article" date="2020" name="J. Med. Genet.">
        <title>De novo mutations in the X-linked TFE3 gene cause intellectual disability with pigmentary mosaicism and storage disorder-like features.</title>
        <authorList>
            <person name="Lehalle D."/>
            <person name="Vabres P."/>
            <person name="Sorlin A."/>
            <person name="Bierhals T."/>
            <person name="Avila M."/>
            <person name="Carmignac V."/>
            <person name="Chevarin M."/>
            <person name="Torti E."/>
            <person name="Abe Y."/>
            <person name="Bartolomaeus T."/>
            <person name="Clayton-Smith J."/>
            <person name="Cogne B."/>
            <person name="Cusco I."/>
            <person name="Duplomb L."/>
            <person name="De Bont E."/>
            <person name="Duffourd Y."/>
            <person name="Duijkers F."/>
            <person name="Elpeleg O."/>
            <person name="Fattal A."/>
            <person name="Genevieve D."/>
            <person name="Guillen Sacoto M.J."/>
            <person name="Guimier A."/>
            <person name="Harris D.J."/>
            <person name="Hempel M."/>
            <person name="Isidor B."/>
            <person name="Jouan T."/>
            <person name="Kuentz P."/>
            <person name="Koshimizu E."/>
            <person name="Lichtenbelt K."/>
            <person name="Loik Ramey V."/>
            <person name="Maik M."/>
            <person name="Miyakate S."/>
            <person name="Murakami Y."/>
            <person name="Pasquier L."/>
            <person name="Pedro H."/>
            <person name="Simone L."/>
            <person name="Sondergaard-Schatz K."/>
            <person name="St-Onge J."/>
            <person name="Thevenon J."/>
            <person name="Valenzuela I."/>
            <person name="Abou Jamra R."/>
            <person name="van Gassen K."/>
            <person name="van Haelst M.M."/>
            <person name="van Koningsbruggen S."/>
            <person name="Verdura E."/>
            <person name="Whelan Habela C."/>
            <person name="Zacher P."/>
            <person name="Riviere J.B."/>
            <person name="Thauvin-Robinet C."/>
            <person name="Betschinger J."/>
            <person name="Faivre L."/>
        </authorList>
    </citation>
    <scope>VARIANTS MRXSPF GLN-117; GLY-184; LYS-187; MET-187; PRO-187; CYS-189; GLN-190 AND PRO-191</scope>
</reference>
<evidence type="ECO:0000250" key="1">
    <source>
        <dbReference type="UniProtKB" id="Q64092"/>
    </source>
</evidence>
<evidence type="ECO:0000255" key="2"/>
<evidence type="ECO:0000255" key="3">
    <source>
        <dbReference type="PROSITE-ProRule" id="PRU00981"/>
    </source>
</evidence>
<evidence type="ECO:0000256" key="4">
    <source>
        <dbReference type="SAM" id="MobiDB-lite"/>
    </source>
</evidence>
<evidence type="ECO:0000269" key="5">
    <source>
    </source>
</evidence>
<evidence type="ECO:0000269" key="6">
    <source>
    </source>
</evidence>
<evidence type="ECO:0000269" key="7">
    <source>
    </source>
</evidence>
<evidence type="ECO:0000269" key="8">
    <source>
    </source>
</evidence>
<evidence type="ECO:0000269" key="9">
    <source>
    </source>
</evidence>
<evidence type="ECO:0000269" key="10">
    <source>
    </source>
</evidence>
<evidence type="ECO:0000269" key="11">
    <source>
    </source>
</evidence>
<evidence type="ECO:0000269" key="12">
    <source>
    </source>
</evidence>
<evidence type="ECO:0000269" key="13">
    <source>
    </source>
</evidence>
<evidence type="ECO:0000269" key="14">
    <source>
    </source>
</evidence>
<evidence type="ECO:0000269" key="15">
    <source>
    </source>
</evidence>
<evidence type="ECO:0000269" key="16">
    <source>
    </source>
</evidence>
<evidence type="ECO:0000269" key="17">
    <source>
    </source>
</evidence>
<evidence type="ECO:0000269" key="18">
    <source>
    </source>
</evidence>
<evidence type="ECO:0000269" key="19">
    <source>
    </source>
</evidence>
<evidence type="ECO:0000269" key="20">
    <source>
    </source>
</evidence>
<evidence type="ECO:0000269" key="21">
    <source>
    </source>
</evidence>
<evidence type="ECO:0000303" key="22">
    <source>
    </source>
</evidence>
<evidence type="ECO:0000303" key="23">
    <source>
    </source>
</evidence>
<evidence type="ECO:0000305" key="24"/>
<evidence type="ECO:0000312" key="25">
    <source>
        <dbReference type="HGNC" id="HGNC:11752"/>
    </source>
</evidence>
<evidence type="ECO:0007744" key="26">
    <source>
    </source>
</evidence>
<evidence type="ECO:0007744" key="27">
    <source>
    </source>
</evidence>
<evidence type="ECO:0007744" key="28">
    <source>
    </source>
</evidence>
<evidence type="ECO:0007744" key="29">
    <source>
    </source>
</evidence>
<evidence type="ECO:0007744" key="30">
    <source>
    </source>
</evidence>
<evidence type="ECO:0007744" key="31">
    <source>
    </source>
</evidence>
<evidence type="ECO:0007829" key="32">
    <source>
        <dbReference type="PDB" id="7F09"/>
    </source>
</evidence>
<feature type="chain" id="PRO_0000127471" description="Transcription factor E3">
    <location>
        <begin position="1"/>
        <end position="575"/>
    </location>
</feature>
<feature type="domain" description="bHLH" evidence="3">
    <location>
        <begin position="346"/>
        <end position="399"/>
    </location>
</feature>
<feature type="region of interest" description="Disordered" evidence="4">
    <location>
        <begin position="90"/>
        <end position="153"/>
    </location>
</feature>
<feature type="region of interest" description="Disordered" evidence="4">
    <location>
        <begin position="211"/>
        <end position="246"/>
    </location>
</feature>
<feature type="region of interest" description="Strong transcription activation domain" evidence="2">
    <location>
        <begin position="260"/>
        <end position="271"/>
    </location>
</feature>
<feature type="region of interest" description="Leucine-zipper">
    <location>
        <begin position="409"/>
        <end position="430"/>
    </location>
</feature>
<feature type="region of interest" description="Disordered" evidence="4">
    <location>
        <begin position="473"/>
        <end position="498"/>
    </location>
</feature>
<feature type="region of interest" description="Disordered" evidence="4">
    <location>
        <begin position="534"/>
        <end position="575"/>
    </location>
</feature>
<feature type="short sequence motif" description="Nuclear localization signal" evidence="18">
    <location>
        <begin position="356"/>
        <end position="359"/>
    </location>
</feature>
<feature type="compositionally biased region" description="Low complexity" evidence="4">
    <location>
        <begin position="90"/>
        <end position="126"/>
    </location>
</feature>
<feature type="compositionally biased region" description="Basic and acidic residues" evidence="4">
    <location>
        <begin position="127"/>
        <end position="136"/>
    </location>
</feature>
<feature type="compositionally biased region" description="Low complexity" evidence="4">
    <location>
        <begin position="539"/>
        <end position="575"/>
    </location>
</feature>
<feature type="site" description="Breakpoint for translocation to form PRCC-TFE3 oncogene">
    <location>
        <begin position="178"/>
        <end position="179"/>
    </location>
</feature>
<feature type="site" description="Breakpoint for translocation to form ASPSCR1-TFE3 oncogene">
    <location>
        <begin position="260"/>
        <end position="261"/>
    </location>
</feature>
<feature type="site" description="Breakpoint for translocation to form NONO-TFE3, PSF-TFE3 and ASPSCR1-TFE3 oncogenes">
    <location>
        <begin position="295"/>
        <end position="296"/>
    </location>
</feature>
<feature type="modified residue" description="Phosphoserine; by MTOR" evidence="18">
    <location>
        <position position="47"/>
    </location>
</feature>
<feature type="modified residue" description="Asymmetric dimethylarginine" evidence="1">
    <location>
        <position position="188"/>
    </location>
</feature>
<feature type="modified residue" description="Phosphoserine; by MTOR" evidence="11 18">
    <location>
        <position position="321"/>
    </location>
</feature>
<feature type="modified residue" description="Phosphoserine" evidence="30">
    <location>
        <position position="542"/>
    </location>
</feature>
<feature type="modified residue" description="Phosphoserine" evidence="27 29 30">
    <location>
        <position position="548"/>
    </location>
</feature>
<feature type="modified residue" description="Phosphoserine" evidence="1">
    <location>
        <position position="554"/>
    </location>
</feature>
<feature type="modified residue" description="Phosphoserine" evidence="27 28 29">
    <location>
        <position position="556"/>
    </location>
</feature>
<feature type="modified residue" description="Phosphoserine" evidence="26 27 29">
    <location>
        <position position="560"/>
    </location>
</feature>
<feature type="modified residue" description="Phosphoserine" evidence="28">
    <location>
        <position position="568"/>
    </location>
</feature>
<feature type="cross-link" description="Glycyl lysine isopeptide (Lys-Gly) (interchain with G-Cter in SUMO2)" evidence="31">
    <location>
        <position position="339"/>
    </location>
</feature>
<feature type="splice variant" id="VSP_056882" description="In isoform 2." evidence="22">
    <original>SLPISLQATPATPATLSASSSAGGSRTPAMSSS</original>
    <variation>RGLQDPCHVVIFFIEGLAAAAANAGPGAGAGEA</variation>
    <location>
        <begin position="77"/>
        <end position="109"/>
    </location>
</feature>
<feature type="splice variant" id="VSP_056883" description="In isoform 2." evidence="22">
    <location>
        <begin position="110"/>
        <end position="575"/>
    </location>
</feature>
<feature type="sequence variant" id="VAR_027501" description="In dbSNP:rs5953258.">
    <original>S</original>
    <variation>C</variation>
    <location>
        <position position="96"/>
    </location>
</feature>
<feature type="sequence variant" id="VAR_086338" description="In MRXSPF." evidence="16 17">
    <original>R</original>
    <variation>Q</variation>
    <location>
        <position position="117"/>
    </location>
</feature>
<feature type="sequence variant" id="VAR_086339" description="In MRXSPF." evidence="13">
    <original>Q</original>
    <variation>P</variation>
    <location>
        <position position="119"/>
    </location>
</feature>
<feature type="sequence variant" id="VAR_086340" description="In MRXSPF; abolished bolished interaction with small GTPases Rag (RagA/RRAGA and RagC/RRAGC)." evidence="17 18">
    <original>E</original>
    <variation>G</variation>
    <location>
        <position position="184"/>
    </location>
</feature>
<feature type="sequence variant" id="VAR_086341" description="In MRXSPF; abolished bolished interaction with small GTPases Rag (RagA/RRAGA and RagC/RRAGC)." evidence="13 18">
    <original>P</original>
    <variation>L</variation>
    <location>
        <position position="186"/>
    </location>
</feature>
<feature type="sequence variant" id="VAR_086342" description="In MRXSPF." evidence="17">
    <original>T</original>
    <variation>K</variation>
    <location>
        <position position="187"/>
    </location>
</feature>
<feature type="sequence variant" id="VAR_086343" description="In MRXSPF; abolished bolished interaction with small GTPases Rag (RagA/RRAGA and RagC/RRAGC); dbSNP:rs2064742925." evidence="13 17 18">
    <original>T</original>
    <variation>M</variation>
    <location>
        <position position="187"/>
    </location>
</feature>
<feature type="sequence variant" id="VAR_086344" description="In MRXSPF." evidence="17">
    <original>T</original>
    <variation>P</variation>
    <location>
        <position position="187"/>
    </location>
</feature>
<feature type="sequence variant" id="VAR_086345" description="In MRXSPF." evidence="13">
    <original>T</original>
    <variation>R</variation>
    <location>
        <position position="187"/>
    </location>
</feature>
<feature type="sequence variant" id="VAR_086346" description="In MRXSPF; abolished bolished interaction with small GTPases Rag (RagA/RRAGA and RagC/RRAGC); dbSNP:rs2064742830." evidence="17 18">
    <original>Y</original>
    <variation>C</variation>
    <location>
        <position position="189"/>
    </location>
</feature>
<feature type="sequence variant" id="VAR_086347" description="In MRXSPF; abolished bolished interaction with small GTPases Rag (RagA/RRAGA and RagC/RRAGC)." evidence="17 18">
    <original>H</original>
    <variation>Q</variation>
    <location>
        <position position="190"/>
    </location>
</feature>
<feature type="sequence variant" id="VAR_086348" description="In MRXSPF; abolished bolished interaction with small GTPases Rag (RagA/RRAGA and RagC/RRAGC)." evidence="17 18">
    <original>L</original>
    <variation>P</variation>
    <location>
        <position position="191"/>
    </location>
</feature>
<feature type="sequence variant" id="VAR_086349" description="In MRXSPF; abolished bolished interaction with small GTPases Rag (RagA/RRAGA and RagC/RRAGC)." evidence="13 18">
    <original>Q</original>
    <variation>P</variation>
    <location>
        <position position="201"/>
    </location>
</feature>
<feature type="sequence variant" id="VAR_027502" description="In dbSNP:rs3027470.">
    <original>T</original>
    <variation>A</variation>
    <location>
        <position position="313"/>
    </location>
</feature>
<feature type="mutagenesis site" description="Impaired phosphorylation by MTOR, leading to abolished ubiquitination and degradation by the SCF(BTRC) complex." evidence="18">
    <original>S</original>
    <variation>A</variation>
    <location>
        <position position="47"/>
    </location>
</feature>
<feature type="mutagenesis site" description="Abolished interaction with Interacts with small GTPases Rag and recruitment to the lysosomal membrane." evidence="11">
    <original>SR</original>
    <variation>AA</variation>
    <location>
        <begin position="112"/>
        <end position="113"/>
    </location>
</feature>
<feature type="mutagenesis site" description="Accumulates in the nucleus due to impaired phosphorylation. Does not affect ubiquitination by the SCF(BTRC) complex." evidence="11">
    <original>S</original>
    <variation>A</variation>
    <location>
        <position position="321"/>
    </location>
</feature>
<feature type="mutagenesis site" description="Abolished localization to the nucleus." evidence="18">
    <original>RRRR</original>
    <variation>AAAA</variation>
    <location>
        <begin position="356"/>
        <end position="359"/>
    </location>
</feature>
<feature type="sequence conflict" description="In Ref. 6; CAA65800." evidence="24" ref="6">
    <original>V</original>
    <variation>M</variation>
    <location>
        <position position="172"/>
    </location>
</feature>
<feature type="sequence conflict" description="In Ref. 6; CAA65800." evidence="24" ref="6">
    <original>P</original>
    <variation>S</variation>
    <location>
        <position position="219"/>
    </location>
</feature>
<feature type="sequence conflict" description="In Ref. 7; CAA35714." evidence="24" ref="7">
    <original>P</original>
    <variation>K</variation>
    <location>
        <position position="222"/>
    </location>
</feature>
<feature type="sequence conflict" description="In Ref. 6; CAA65800." evidence="24" ref="6">
    <original>P</original>
    <variation>L</variation>
    <location>
        <position position="229"/>
    </location>
</feature>
<feature type="sequence conflict" description="In Ref. 7; CAA35714." evidence="24" ref="7">
    <original>P</original>
    <variation>G</variation>
    <location>
        <position position="443"/>
    </location>
</feature>
<feature type="sequence conflict" description="In Ref. 6; CAA65800 and 7; CAA35714." evidence="24" ref="6 7">
    <original>A</original>
    <variation>T</variation>
    <location>
        <position position="455"/>
    </location>
</feature>
<feature type="sequence conflict" description="In Ref. 7; CAA35714." evidence="24" ref="7">
    <original>A</original>
    <variation>R</variation>
    <location>
        <position position="475"/>
    </location>
</feature>
<feature type="sequence conflict" description="In Ref. 6; CAA65800." evidence="24" ref="6">
    <original>S</original>
    <variation>M</variation>
    <location>
        <position position="575"/>
    </location>
</feature>
<feature type="helix" evidence="32">
    <location>
        <begin position="361"/>
        <end position="372"/>
    </location>
</feature>
<feature type="helix" evidence="32">
    <location>
        <begin position="385"/>
        <end position="429"/>
    </location>
</feature>
<sequence>MSHAAEPARDGVEASAEGPRAVFVLLEERRPADSAQLLSLNSLLPESGIVADIELENVLDPDSFYELKSQPLPLRSSLPISLQATPATPATLSASSSAGGSRTPAMSSSSSSRVLLRQQLMRAQAQEQERRERREQAAAAPFPSPAPASPAISVVGVSAGGHTLSRPPPAQVPREVLKVQTHLENPTRYHLQQARRQQVKQYLSTTLGPKLASQALTPPPGPASAQPLPAPEAAHTTGPTGSAPNSPMALLTIGSSSEKEIDDVIDEIISLESSYNDEMLSYLPGGTTGLQLPSTLPVSGNLLDVYSSQGVATPAITVSNSCPAELPNIKREISETEAKALLKERQKKDNHNLIERRRRFNINDRIKELGTLIPKSSDPEMRWNKGTILKASVDYIRKLQKEQQRSKDLESRQRSLEQANRSLQLRIQELELQAQIHGLPVPPTPGLLSLATTSASDSLKPEQLDIEEEGRPGAATFHVGGGPAQNAPHQQPPAPPSDALLDLHFPSDHLGDLGDPFHLGLEDILMEEEEGVVGGLSGGALSPLRAASDPLLSSVSPAVSKASSRRSSFSMEEES</sequence>
<dbReference type="EMBL" id="X96717">
    <property type="protein sequence ID" value="CAA65478.1"/>
    <property type="molecule type" value="mRNA"/>
</dbReference>
<dbReference type="EMBL" id="AL161985">
    <property type="protein sequence ID" value="CAI46207.1"/>
    <property type="molecule type" value="mRNA"/>
</dbReference>
<dbReference type="EMBL" id="AC146820">
    <property type="status" value="NOT_ANNOTATED_CDS"/>
    <property type="molecule type" value="Genomic_DNA"/>
</dbReference>
<dbReference type="EMBL" id="AF196779">
    <property type="status" value="NOT_ANNOTATED_CDS"/>
    <property type="molecule type" value="Genomic_DNA"/>
</dbReference>
<dbReference type="EMBL" id="BX572102">
    <property type="status" value="NOT_ANNOTATED_CDS"/>
    <property type="molecule type" value="Genomic_DNA"/>
</dbReference>
<dbReference type="EMBL" id="X99721">
    <property type="protein sequence ID" value="CAA68061.1"/>
    <property type="molecule type" value="Genomic_DNA"/>
</dbReference>
<dbReference type="EMBL" id="X97160">
    <property type="protein sequence ID" value="CAA65800.1"/>
    <property type="status" value="ALT_SEQ"/>
    <property type="molecule type" value="Genomic_DNA"/>
</dbReference>
<dbReference type="EMBL" id="X97161">
    <property type="protein sequence ID" value="CAA65800.1"/>
    <property type="status" value="JOINED"/>
    <property type="molecule type" value="Genomic_DNA"/>
</dbReference>
<dbReference type="EMBL" id="X97162">
    <property type="protein sequence ID" value="CAA65800.1"/>
    <property type="status" value="JOINED"/>
    <property type="molecule type" value="Genomic_DNA"/>
</dbReference>
<dbReference type="EMBL" id="X51330">
    <property type="protein sequence ID" value="CAA35714.1"/>
    <property type="status" value="ALT_SEQ"/>
    <property type="molecule type" value="mRNA"/>
</dbReference>
<dbReference type="CCDS" id="CCDS14315.3">
    <molecule id="P19532-1"/>
</dbReference>
<dbReference type="PIR" id="A34596">
    <property type="entry name" value="A34596"/>
</dbReference>
<dbReference type="RefSeq" id="NP_001269071.1">
    <property type="nucleotide sequence ID" value="NM_001282142.1"/>
</dbReference>
<dbReference type="RefSeq" id="NP_006512.2">
    <molecule id="P19532-1"/>
    <property type="nucleotide sequence ID" value="NM_006521.5"/>
</dbReference>
<dbReference type="PDB" id="7F09">
    <property type="method" value="X-ray"/>
    <property type="resolution" value="2.60 A"/>
    <property type="chains" value="A/B/C/D=360-430"/>
</dbReference>
<dbReference type="PDBsum" id="7F09"/>
<dbReference type="SMR" id="P19532"/>
<dbReference type="BioGRID" id="112888">
    <property type="interactions" value="52"/>
</dbReference>
<dbReference type="DIP" id="DIP-50187N"/>
<dbReference type="FunCoup" id="P19532">
    <property type="interactions" value="3834"/>
</dbReference>
<dbReference type="IntAct" id="P19532">
    <property type="interactions" value="23"/>
</dbReference>
<dbReference type="MINT" id="P19532"/>
<dbReference type="STRING" id="9606.ENSP00000314129"/>
<dbReference type="ChEMBL" id="CHEMBL4295726"/>
<dbReference type="GlyCosmos" id="P19532">
    <property type="glycosylation" value="1 site, 1 glycan"/>
</dbReference>
<dbReference type="GlyGen" id="P19532">
    <property type="glycosylation" value="5 sites, 1 O-linked glycan (1 site)"/>
</dbReference>
<dbReference type="iPTMnet" id="P19532"/>
<dbReference type="PhosphoSitePlus" id="P19532"/>
<dbReference type="BioMuta" id="TFE3"/>
<dbReference type="DMDM" id="160113240"/>
<dbReference type="jPOST" id="P19532"/>
<dbReference type="MassIVE" id="P19532"/>
<dbReference type="PaxDb" id="9606-ENSP00000314129"/>
<dbReference type="PeptideAtlas" id="P19532"/>
<dbReference type="ProteomicsDB" id="53672">
    <molecule id="P19532-1"/>
</dbReference>
<dbReference type="Pumba" id="P19532"/>
<dbReference type="Antibodypedia" id="11943">
    <property type="antibodies" value="442 antibodies from 39 providers"/>
</dbReference>
<dbReference type="DNASU" id="7030"/>
<dbReference type="Ensembl" id="ENST00000315869.8">
    <molecule id="P19532-1"/>
    <property type="protein sequence ID" value="ENSP00000314129.7"/>
    <property type="gene ID" value="ENSG00000068323.17"/>
</dbReference>
<dbReference type="Ensembl" id="ENST00000493583.5">
    <molecule id="P19532-2"/>
    <property type="protein sequence ID" value="ENSP00000476976.1"/>
    <property type="gene ID" value="ENSG00000068323.17"/>
</dbReference>
<dbReference type="Ensembl" id="ENST00000710095.1">
    <molecule id="P19532-1"/>
    <property type="protein sequence ID" value="ENSP00000518054.1"/>
    <property type="gene ID" value="ENSG00000292217.1"/>
</dbReference>
<dbReference type="Ensembl" id="ENST00000710096.1">
    <molecule id="P19532-2"/>
    <property type="protein sequence ID" value="ENSP00000518055.1"/>
    <property type="gene ID" value="ENSG00000292217.1"/>
</dbReference>
<dbReference type="GeneID" id="7030"/>
<dbReference type="KEGG" id="hsa:7030"/>
<dbReference type="MANE-Select" id="ENST00000315869.8">
    <property type="protein sequence ID" value="ENSP00000314129.7"/>
    <property type="RefSeq nucleotide sequence ID" value="NM_006521.6"/>
    <property type="RefSeq protein sequence ID" value="NP_006512.2"/>
</dbReference>
<dbReference type="UCSC" id="uc004dmb.5">
    <molecule id="P19532-1"/>
    <property type="organism name" value="human"/>
</dbReference>
<dbReference type="AGR" id="HGNC:11752"/>
<dbReference type="CTD" id="7030"/>
<dbReference type="DisGeNET" id="7030"/>
<dbReference type="GeneCards" id="TFE3"/>
<dbReference type="HGNC" id="HGNC:11752">
    <property type="gene designation" value="TFE3"/>
</dbReference>
<dbReference type="HPA" id="ENSG00000068323">
    <property type="expression patterns" value="Low tissue specificity"/>
</dbReference>
<dbReference type="MalaCards" id="TFE3"/>
<dbReference type="MIM" id="300854">
    <property type="type" value="phenotype"/>
</dbReference>
<dbReference type="MIM" id="301066">
    <property type="type" value="phenotype"/>
</dbReference>
<dbReference type="MIM" id="314310">
    <property type="type" value="gene"/>
</dbReference>
<dbReference type="neXtProt" id="NX_P19532"/>
<dbReference type="OpenTargets" id="ENSG00000068323"/>
<dbReference type="Orphanet" id="163699">
    <property type="disease" value="Alveolar soft tissue sarcoma"/>
</dbReference>
<dbReference type="Orphanet" id="157791">
    <property type="disease" value="Epithelioid hemangioendothelioma"/>
</dbReference>
<dbReference type="Orphanet" id="319308">
    <property type="disease" value="MiT family translocation renal cell carcinoma"/>
</dbReference>
<dbReference type="PharmGKB" id="PA36467"/>
<dbReference type="VEuPathDB" id="HostDB:ENSG00000068323"/>
<dbReference type="eggNOG" id="KOG1318">
    <property type="taxonomic scope" value="Eukaryota"/>
</dbReference>
<dbReference type="GeneTree" id="ENSGT00940000157503"/>
<dbReference type="HOGENOM" id="CLU_2196061_0_0_1"/>
<dbReference type="InParanoid" id="P19532"/>
<dbReference type="OMA" id="ATFHAGE"/>
<dbReference type="OrthoDB" id="6242697at2759"/>
<dbReference type="PAN-GO" id="P19532">
    <property type="GO annotations" value="4 GO annotations based on evolutionary models"/>
</dbReference>
<dbReference type="PhylomeDB" id="P19532"/>
<dbReference type="TreeFam" id="TF317174"/>
<dbReference type="PathwayCommons" id="P19532"/>
<dbReference type="Reactome" id="R-HSA-9856649">
    <property type="pathway name" value="Transcriptional and post-translational regulation of MITF-M expression and activity"/>
</dbReference>
<dbReference type="SignaLink" id="P19532"/>
<dbReference type="SIGNOR" id="P19532"/>
<dbReference type="BioGRID-ORCS" id="7030">
    <property type="hits" value="15 hits in 803 CRISPR screens"/>
</dbReference>
<dbReference type="ChiTaRS" id="TFE3">
    <property type="organism name" value="human"/>
</dbReference>
<dbReference type="GeneWiki" id="TFE3"/>
<dbReference type="GenomeRNAi" id="7030"/>
<dbReference type="Pharos" id="P19532">
    <property type="development level" value="Tbio"/>
</dbReference>
<dbReference type="PRO" id="PR:P19532"/>
<dbReference type="Proteomes" id="UP000005640">
    <property type="component" value="Chromosome X"/>
</dbReference>
<dbReference type="RNAct" id="P19532">
    <property type="molecule type" value="protein"/>
</dbReference>
<dbReference type="Bgee" id="ENSG00000068323">
    <property type="expression patterns" value="Expressed in inferior olivary complex and 206 other cell types or tissues"/>
</dbReference>
<dbReference type="ExpressionAtlas" id="P19532">
    <property type="expression patterns" value="baseline and differential"/>
</dbReference>
<dbReference type="GO" id="GO:0000785">
    <property type="term" value="C:chromatin"/>
    <property type="evidence" value="ECO:0000247"/>
    <property type="project" value="NTNU_SB"/>
</dbReference>
<dbReference type="GO" id="GO:0005737">
    <property type="term" value="C:cytoplasm"/>
    <property type="evidence" value="ECO:0000314"/>
    <property type="project" value="UniProtKB"/>
</dbReference>
<dbReference type="GO" id="GO:0005829">
    <property type="term" value="C:cytosol"/>
    <property type="evidence" value="ECO:0000314"/>
    <property type="project" value="HPA"/>
</dbReference>
<dbReference type="GO" id="GO:0005765">
    <property type="term" value="C:lysosomal membrane"/>
    <property type="evidence" value="ECO:0000314"/>
    <property type="project" value="UniProtKB"/>
</dbReference>
<dbReference type="GO" id="GO:0005654">
    <property type="term" value="C:nucleoplasm"/>
    <property type="evidence" value="ECO:0000314"/>
    <property type="project" value="HPA"/>
</dbReference>
<dbReference type="GO" id="GO:0005634">
    <property type="term" value="C:nucleus"/>
    <property type="evidence" value="ECO:0000314"/>
    <property type="project" value="UniProtKB"/>
</dbReference>
<dbReference type="GO" id="GO:0001228">
    <property type="term" value="F:DNA-binding transcription activator activity, RNA polymerase II-specific"/>
    <property type="evidence" value="ECO:0007669"/>
    <property type="project" value="Ensembl"/>
</dbReference>
<dbReference type="GO" id="GO:0003700">
    <property type="term" value="F:DNA-binding transcription factor activity"/>
    <property type="evidence" value="ECO:0000314"/>
    <property type="project" value="UniProt"/>
</dbReference>
<dbReference type="GO" id="GO:0000981">
    <property type="term" value="F:DNA-binding transcription factor activity, RNA polymerase II-specific"/>
    <property type="evidence" value="ECO:0000314"/>
    <property type="project" value="UniProtKB"/>
</dbReference>
<dbReference type="GO" id="GO:0046983">
    <property type="term" value="F:protein dimerization activity"/>
    <property type="evidence" value="ECO:0007669"/>
    <property type="project" value="InterPro"/>
</dbReference>
<dbReference type="GO" id="GO:0000978">
    <property type="term" value="F:RNA polymerase II cis-regulatory region sequence-specific DNA binding"/>
    <property type="evidence" value="ECO:0000318"/>
    <property type="project" value="GO_Central"/>
</dbReference>
<dbReference type="GO" id="GO:1990837">
    <property type="term" value="F:sequence-specific double-stranded DNA binding"/>
    <property type="evidence" value="ECO:0000314"/>
    <property type="project" value="ARUK-UCL"/>
</dbReference>
<dbReference type="GO" id="GO:0000976">
    <property type="term" value="F:transcription cis-regulatory region binding"/>
    <property type="evidence" value="ECO:0000250"/>
    <property type="project" value="UniProtKB"/>
</dbReference>
<dbReference type="GO" id="GO:0002250">
    <property type="term" value="P:adaptive immune response"/>
    <property type="evidence" value="ECO:0007669"/>
    <property type="project" value="UniProtKB-KW"/>
</dbReference>
<dbReference type="GO" id="GO:0006959">
    <property type="term" value="P:humoral immune response"/>
    <property type="evidence" value="ECO:0000250"/>
    <property type="project" value="UniProtKB"/>
</dbReference>
<dbReference type="GO" id="GO:0007040">
    <property type="term" value="P:lysosome organization"/>
    <property type="evidence" value="ECO:0000314"/>
    <property type="project" value="UniProtKB"/>
</dbReference>
<dbReference type="GO" id="GO:0120163">
    <property type="term" value="P:negative regulation of cold-induced thermogenesis"/>
    <property type="evidence" value="ECO:0000250"/>
    <property type="project" value="YuBioLab"/>
</dbReference>
<dbReference type="GO" id="GO:0090336">
    <property type="term" value="P:positive regulation of brown fat cell differentiation"/>
    <property type="evidence" value="ECO:0000250"/>
    <property type="project" value="UniProtKB"/>
</dbReference>
<dbReference type="GO" id="GO:0045785">
    <property type="term" value="P:positive regulation of cell adhesion"/>
    <property type="evidence" value="ECO:0000315"/>
    <property type="project" value="UniProtKB"/>
</dbReference>
<dbReference type="GO" id="GO:0045893">
    <property type="term" value="P:positive regulation of DNA-templated transcription"/>
    <property type="evidence" value="ECO:0000315"/>
    <property type="project" value="UniProtKB"/>
</dbReference>
<dbReference type="GO" id="GO:0045944">
    <property type="term" value="P:positive regulation of transcription by RNA polymerase II"/>
    <property type="evidence" value="ECO:0000315"/>
    <property type="project" value="UniProtKB"/>
</dbReference>
<dbReference type="GO" id="GO:0045670">
    <property type="term" value="P:regulation of osteoclast differentiation"/>
    <property type="evidence" value="ECO:0007669"/>
    <property type="project" value="InterPro"/>
</dbReference>
<dbReference type="GO" id="GO:0006357">
    <property type="term" value="P:regulation of transcription by RNA polymerase II"/>
    <property type="evidence" value="ECO:0000318"/>
    <property type="project" value="GO_Central"/>
</dbReference>
<dbReference type="CDD" id="cd18928">
    <property type="entry name" value="bHLHzip_TFE3"/>
    <property type="match status" value="1"/>
</dbReference>
<dbReference type="FunFam" id="4.10.280.10:FF:000003">
    <property type="entry name" value="microphthalmia-associated transcription factor isoform X1"/>
    <property type="match status" value="1"/>
</dbReference>
<dbReference type="Gene3D" id="4.10.280.10">
    <property type="entry name" value="Helix-loop-helix DNA-binding domain"/>
    <property type="match status" value="1"/>
</dbReference>
<dbReference type="InterPro" id="IPR011598">
    <property type="entry name" value="bHLH_dom"/>
</dbReference>
<dbReference type="InterPro" id="IPR024100">
    <property type="entry name" value="bHLHzip_TFE3"/>
</dbReference>
<dbReference type="InterPro" id="IPR036638">
    <property type="entry name" value="HLH_DNA-bd_sf"/>
</dbReference>
<dbReference type="InterPro" id="IPR021802">
    <property type="entry name" value="MiT/TFE_C"/>
</dbReference>
<dbReference type="InterPro" id="IPR031867">
    <property type="entry name" value="MiT/TFE_N"/>
</dbReference>
<dbReference type="PANTHER" id="PTHR45776">
    <property type="entry name" value="MIP04163P"/>
    <property type="match status" value="1"/>
</dbReference>
<dbReference type="PANTHER" id="PTHR45776:SF3">
    <property type="entry name" value="TRANSCRIPTION FACTOR E3"/>
    <property type="match status" value="1"/>
</dbReference>
<dbReference type="Pfam" id="PF11851">
    <property type="entry name" value="DUF3371"/>
    <property type="match status" value="1"/>
</dbReference>
<dbReference type="Pfam" id="PF00010">
    <property type="entry name" value="HLH"/>
    <property type="match status" value="1"/>
</dbReference>
<dbReference type="Pfam" id="PF15951">
    <property type="entry name" value="MITF_TFEB_C_3_N"/>
    <property type="match status" value="1"/>
</dbReference>
<dbReference type="SMART" id="SM00353">
    <property type="entry name" value="HLH"/>
    <property type="match status" value="1"/>
</dbReference>
<dbReference type="SUPFAM" id="SSF47459">
    <property type="entry name" value="HLH, helix-loop-helix DNA-binding domain"/>
    <property type="match status" value="1"/>
</dbReference>
<dbReference type="PROSITE" id="PS50888">
    <property type="entry name" value="BHLH"/>
    <property type="match status" value="1"/>
</dbReference>
<keyword id="KW-0002">3D-structure</keyword>
<keyword id="KW-0010">Activator</keyword>
<keyword id="KW-1064">Adaptive immunity</keyword>
<keyword id="KW-0025">Alternative splicing</keyword>
<keyword id="KW-0160">Chromosomal rearrangement</keyword>
<keyword id="KW-0963">Cytoplasm</keyword>
<keyword id="KW-0225">Disease variant</keyword>
<keyword id="KW-0238">DNA-binding</keyword>
<keyword id="KW-0391">Immunity</keyword>
<keyword id="KW-0991">Intellectual disability</keyword>
<keyword id="KW-1017">Isopeptide bond</keyword>
<keyword id="KW-0458">Lysosome</keyword>
<keyword id="KW-0472">Membrane</keyword>
<keyword id="KW-0488">Methylation</keyword>
<keyword id="KW-0539">Nucleus</keyword>
<keyword id="KW-0597">Phosphoprotein</keyword>
<keyword id="KW-1267">Proteomics identification</keyword>
<keyword id="KW-0656">Proto-oncogene</keyword>
<keyword id="KW-1185">Reference proteome</keyword>
<keyword id="KW-0804">Transcription</keyword>
<keyword id="KW-0805">Transcription regulation</keyword>
<keyword id="KW-0832">Ubl conjugation</keyword>
<proteinExistence type="evidence at protein level"/>
<accession>P19532</accession>
<accession>A8MZL6</accession>
<accession>Q5JU74</accession>
<accession>Q92757</accession>
<accession>Q92758</accession>
<accession>Q99964</accession>
<name>TFE3_HUMAN</name>
<protein>
    <recommendedName>
        <fullName evidence="23">Transcription factor E3</fullName>
    </recommendedName>
    <alternativeName>
        <fullName>Class E basic helix-loop-helix protein 33</fullName>
        <shortName>bHLHe33</shortName>
    </alternativeName>
</protein>
<comment type="function">
    <text evidence="1 10 11 12 14 15 18 19">Transcription factor that acts as a master regulator of lysosomal biogenesis and immune response (PubMed:2338243, PubMed:24448649, PubMed:29146937, PubMed:30733432, PubMed:31672913, PubMed:37079666). Specifically recognizes and binds E-box sequences (5'-CANNTG-3'); efficient DNA-binding requires dimerization with itself or with another MiT/TFE family member such as TFEB or MITF (PubMed:24448649). Involved in the cellular response to amino acid availability by acting downstream of MTOR: in the presence of nutrients, TFE3 phosphorylation by MTOR promotes its inactivation (PubMed:24448649, PubMed:31672913, PubMed:36608670). Upon starvation or lysosomal stress, inhibition of MTOR induces TFE3 dephosphorylation, resulting in transcription factor activity (PubMed:24448649, PubMed:31672913, PubMed:36608670). Specifically recognizes and binds the CLEAR-box sequence (5'-GTCACGTGAC-3') present in the regulatory region of many lysosomal genes, leading to activate their expression, thereby playing a central role in expression of lysosomal genes (PubMed:24448649). Maintains the pluripotent state of embryonic stem cells by promoting the expression of genes such as ESRRB; mTOR-dependent TFE3 cytosolic retention and inactivation promotes exit from pluripotency (By similarity). Required to maintain the naive pluripotent state of hematopoietic stem cell; mTOR-dependent cytoplasmic retention of TFE3 promotes the exit of hematopoietic stem cell from pluripotency (PubMed:30733432). TFE3 activity is also involved in the inhibition of neuronal progenitor differentiation (By similarity). Acts as a positive regulator of browning of adipose tissue by promoting expression of target genes; mTOR-dependent phosphorylation promotes cytoplasmic retention of TFE3 and inhibits browning of adipose tissue (By similarity). In association with TFEB, activates the expression of CD40L in T-cells, thereby playing a role in T-cell-dependent antibody responses in activated CD4(+) T-cells and thymus-dependent humoral immunity (By similarity). Specifically recognizes the MUE3 box, a subset of E-boxes, present in the immunoglobulin enhancer (PubMed:2338243). It also binds very well to a USF/MLTF site (PubMed:2338243). Promotes TGF-beta-induced transcription of COL1A2; via its interaction with TSC22D1 at E-boxes in the gene proximal promoter (By similarity). May regulate lysosomal positioning in response to nutrient deprivation by promoting the expression of PIP4P1 (PubMed:29146937).</text>
</comment>
<comment type="subunit">
    <text evidence="1 6 7 11 18">Homodimer and heterodimer; with TFEB or MITF (PubMed:15507434, PubMed:1748288). Interacts with RRAGC/RagC GDP-bound and RRAGD/RagD GDP-bound; promoting its recruitment to lysosomal membrane in the presence of nutrients (PubMed:24448649, PubMed:36608670). Interacts with TSC22D1; the interaction is enhanced in the presence of TGF-beta (By similarity).</text>
</comment>
<comment type="interaction">
    <interactant intactId="EBI-1048957">
        <id>P19532</id>
    </interactant>
    <interactant intactId="EBI-358808">
        <id>O15397</id>
        <label>IPO8</label>
    </interactant>
    <organismsDiffer>false</organismsDiffer>
    <experiments>2</experiments>
</comment>
<comment type="interaction">
    <interactant intactId="EBI-1048957">
        <id>P19532</id>
    </interactant>
    <interactant intactId="EBI-1038192">
        <id>Q9UHA4</id>
        <label>LAMTOR3</label>
    </interactant>
    <organismsDiffer>false</organismsDiffer>
    <experiments>3</experiments>
</comment>
<comment type="interaction">
    <interactant intactId="EBI-1048957">
        <id>P19532</id>
    </interactant>
    <interactant intactId="EBI-3910192">
        <id>O75030</id>
        <label>MITF</label>
    </interactant>
    <organismsDiffer>false</organismsDiffer>
    <experiments>2</experiments>
</comment>
<comment type="interaction">
    <interactant intactId="EBI-1048957">
        <id>P19532</id>
    </interactant>
    <interactant intactId="EBI-80140">
        <id>P63165</id>
        <label>SUMO1</label>
    </interactant>
    <organismsDiffer>false</organismsDiffer>
    <experiments>2</experiments>
</comment>
<comment type="subcellular location">
    <subcellularLocation>
        <location evidence="8 9 11 14 18 19">Cytoplasm</location>
        <location evidence="8 9 11 14 18 19">Cytosol</location>
    </subcellularLocation>
    <subcellularLocation>
        <location evidence="8 9 11 14 18 19">Nucleus</location>
    </subcellularLocation>
    <subcellularLocation>
        <location evidence="11">Lysosome membrane</location>
    </subcellularLocation>
    <text evidence="9 11 14 18 19">When nutrients are present, recruited to the lysosomal membrane via association with GDP-bound RagC/RRAGC (or RagD/RRAGD): it is then phosphorylated by MTOR (PubMed:24448649, PubMed:37079666). Phosphorylation by MTOR prevents nuclear translocation and promotes ubiquitination and degradation (PubMed:22692423, PubMed:30733432, PubMed:36608670, PubMed:37079666). Conversely, inhibition of mTORC1, starvation and lysosomal disruption, promotes dephosphorylation and translocation to the nucleus (PubMed:22692423, PubMed:30733432, PubMed:37079666).</text>
</comment>
<comment type="alternative products">
    <event type="alternative splicing"/>
    <isoform>
        <id>P19532-1</id>
        <name>1</name>
        <sequence type="displayed"/>
    </isoform>
    <isoform>
        <id>P19532-2</id>
        <name>2</name>
        <sequence type="described" ref="VSP_056882 VSP_056883"/>
    </isoform>
</comment>
<comment type="tissue specificity">
    <text evidence="21">Ubiquitous in fetal and adult tissues.</text>
</comment>
<comment type="PTM">
    <text evidence="6">Sumoylated; does not affect dimerization with MITF.</text>
</comment>
<comment type="PTM">
    <text evidence="8 11 14 18">Phosphorylation ar Ser-47 and Ser-321 by MTOR via non-canonical mTORC1 pathway regulates its stability and subcellular location, respectively (PubMed:21209915, PubMed:24448649, PubMed:30733432, PubMed:36608670). When nutrients are present, phosphorylation by MTOR at Ser-47 promotes ubiquitination by the SCF(BTRC) complex, followed by degradation (PubMed:36608670). When nutrients are present, phosphorylation by MTOR at Ser-321 also promotes association with 14-3-3/YWHA adapters and retention in the cytosol (PubMed:24448649, PubMed:30733432). Phosphorylation at Ser-47 plays a more critical role than phosphorylation at Ser-321 for TFE3 inactivation (PubMed:36608670). Inhibition of mTORC1, starvation and lysosomal disruption, promotes dephosphorylation and transcription factor activity (PubMed:30733432, PubMed:36608670).</text>
</comment>
<comment type="PTM">
    <text evidence="18">Ubiquitinated by the SCF(BTRC) and SCF(FBXW11) complexes following phosphorylation at Ser-47 by MTOR, leading to its degradation by the proteasome.</text>
</comment>
<comment type="disease" evidence="13 16 17 18">
    <disease id="DI-06258">
        <name>Intellectual developmental disorder, X-linked, syndromic, with pigmentary mosaicism and coarse facies</name>
        <acronym>MRXSPF</acronym>
        <description>A disorder characterized by severe developmental delay with impaired intellectual development and poor speech, coarse facial dysmorphisms, and Blaschkoid pigmentary mosaicism. Additional clinical features may include epilepsy, orthopedic abnormalities, hypotonia, and growth abnormalities. The disorder affects both males and females.</description>
        <dbReference type="MIM" id="301066"/>
    </disease>
    <text>The disease is caused by variants affecting the gene represented in this entry.</text>
</comment>
<comment type="disease">
    <text evidence="5">A chromosomal aberration involving TFE3 is found in patients with alveolar soft part sarcoma. Translocation t(X;17)(p11;q25) with ASPSCR1 forms a ASPSCR1-TFE3 fusion protein.</text>
</comment>
<comment type="disease" evidence="20 21">
    <disease id="DI-03249">
        <name>Renal cell carcinoma Xp11-associated</name>
        <acronym>RCCX1</acronym>
        <description>Renal cell carcinoma is a heterogeneous group of sporadic or hereditary carcinoma derived from cells of the proximal renal tubular epithelium. It is subclassified into clear cell renal carcinoma (non-papillary carcinoma), papillary renal cell carcinoma, chromophobe renal cell carcinoma, collecting duct carcinoma with medullary carcinoma of the kidney, and unclassified renal cell carcinoma. RCCX1 histology shows both clear cells and papillary architecture, often with abundant psammoma bodies, although variable histologic features have been observed.</description>
        <dbReference type="MIM" id="300854"/>
    </disease>
    <text evidence="20 21">Disease susceptibility is associated with variants affecting the gene represented in this entry. Chromosomal aberrations involving TFE3 are found in patients with papillary renal cell carcinoma. Translocation t(X;1)(p11.2;q21.2) with PRCC; translocation t(X;1)(p11.2;p34) with PSF; inversion inv(X)(p11.2;q12) that fuses NONO to TFE3.</text>
</comment>
<comment type="similarity">
    <text evidence="24">Belongs to the MiT/TFE family.</text>
</comment>
<comment type="sequence caution" evidence="24">
    <conflict type="frameshift">
        <sequence resource="EMBL-CDS" id="CAA35714"/>
    </conflict>
</comment>
<comment type="sequence caution" evidence="24">
    <conflict type="erroneous gene model prediction">
        <sequence resource="EMBL-CDS" id="CAA65800"/>
    </conflict>
</comment>
<comment type="online information" name="Atlas of Genetics and Cytogenetics in Oncology and Haematology">
    <link uri="https://atlasgeneticsoncology.org/gene/86/TFE3"/>
</comment>